<feature type="chain" id="PRO_0000074325" description="Chromatin-remodeling ATPase INO80">
    <location>
        <begin position="1"/>
        <end position="1904"/>
    </location>
</feature>
<feature type="domain" description="DBINO" evidence="6">
    <location>
        <begin position="809"/>
        <end position="934"/>
    </location>
</feature>
<feature type="domain" description="Helicase ATP-binding" evidence="4">
    <location>
        <begin position="1057"/>
        <end position="1229"/>
    </location>
</feature>
<feature type="domain" description="Helicase C-terminal" evidence="5">
    <location>
        <begin position="1630"/>
        <end position="1789"/>
    </location>
</feature>
<feature type="region of interest" description="Disordered" evidence="7">
    <location>
        <begin position="1"/>
        <end position="501"/>
    </location>
</feature>
<feature type="region of interest" description="Disordered" evidence="7">
    <location>
        <begin position="594"/>
        <end position="792"/>
    </location>
</feature>
<feature type="region of interest" description="Disordered" evidence="7">
    <location>
        <begin position="1814"/>
        <end position="1904"/>
    </location>
</feature>
<feature type="coiled-coil region" evidence="3">
    <location>
        <begin position="590"/>
        <end position="655"/>
    </location>
</feature>
<feature type="coiled-coil region" evidence="3">
    <location>
        <begin position="706"/>
        <end position="783"/>
    </location>
</feature>
<feature type="coiled-coil region" evidence="3">
    <location>
        <begin position="877"/>
        <end position="922"/>
    </location>
</feature>
<feature type="short sequence motif" description="DEAQ box">
    <location>
        <begin position="1180"/>
        <end position="1183"/>
    </location>
</feature>
<feature type="compositionally biased region" description="Polar residues" evidence="7">
    <location>
        <begin position="1"/>
        <end position="11"/>
    </location>
</feature>
<feature type="compositionally biased region" description="Basic residues" evidence="7">
    <location>
        <begin position="29"/>
        <end position="44"/>
    </location>
</feature>
<feature type="compositionally biased region" description="Low complexity" evidence="7">
    <location>
        <begin position="51"/>
        <end position="70"/>
    </location>
</feature>
<feature type="compositionally biased region" description="Low complexity" evidence="7">
    <location>
        <begin position="92"/>
        <end position="111"/>
    </location>
</feature>
<feature type="compositionally biased region" description="Low complexity" evidence="7">
    <location>
        <begin position="148"/>
        <end position="158"/>
    </location>
</feature>
<feature type="compositionally biased region" description="Pro residues" evidence="7">
    <location>
        <begin position="176"/>
        <end position="189"/>
    </location>
</feature>
<feature type="compositionally biased region" description="Polar residues" evidence="7">
    <location>
        <begin position="255"/>
        <end position="277"/>
    </location>
</feature>
<feature type="compositionally biased region" description="Polar residues" evidence="7">
    <location>
        <begin position="316"/>
        <end position="329"/>
    </location>
</feature>
<feature type="compositionally biased region" description="Basic and acidic residues" evidence="7">
    <location>
        <begin position="383"/>
        <end position="428"/>
    </location>
</feature>
<feature type="compositionally biased region" description="Basic and acidic residues" evidence="7">
    <location>
        <begin position="435"/>
        <end position="445"/>
    </location>
</feature>
<feature type="compositionally biased region" description="Basic residues" evidence="7">
    <location>
        <begin position="446"/>
        <end position="455"/>
    </location>
</feature>
<feature type="compositionally biased region" description="Basic and acidic residues" evidence="7">
    <location>
        <begin position="635"/>
        <end position="647"/>
    </location>
</feature>
<feature type="compositionally biased region" description="Basic residues" evidence="7">
    <location>
        <begin position="695"/>
        <end position="709"/>
    </location>
</feature>
<feature type="compositionally biased region" description="Basic and acidic residues" evidence="7">
    <location>
        <begin position="710"/>
        <end position="721"/>
    </location>
</feature>
<feature type="compositionally biased region" description="Basic and acidic residues" evidence="7">
    <location>
        <begin position="751"/>
        <end position="764"/>
    </location>
</feature>
<feature type="compositionally biased region" description="Basic and acidic residues" evidence="7">
    <location>
        <begin position="780"/>
        <end position="792"/>
    </location>
</feature>
<feature type="compositionally biased region" description="Basic and acidic residues" evidence="7">
    <location>
        <begin position="1814"/>
        <end position="1825"/>
    </location>
</feature>
<feature type="compositionally biased region" description="Basic residues" evidence="7">
    <location>
        <begin position="1826"/>
        <end position="1835"/>
    </location>
</feature>
<feature type="compositionally biased region" description="Low complexity" evidence="7">
    <location>
        <begin position="1863"/>
        <end position="1873"/>
    </location>
</feature>
<feature type="compositionally biased region" description="Basic residues" evidence="7">
    <location>
        <begin position="1880"/>
        <end position="1893"/>
    </location>
</feature>
<feature type="binding site" evidence="4">
    <location>
        <begin position="1070"/>
        <end position="1077"/>
    </location>
    <ligand>
        <name>ATP</name>
        <dbReference type="ChEBI" id="CHEBI:30616"/>
    </ligand>
</feature>
<proteinExistence type="inferred from homology"/>
<evidence type="ECO:0000250" key="1">
    <source>
        <dbReference type="UniProtKB" id="P53115"/>
    </source>
</evidence>
<evidence type="ECO:0000250" key="2">
    <source>
        <dbReference type="UniProtKB" id="Q9ULG1"/>
    </source>
</evidence>
<evidence type="ECO:0000255" key="3"/>
<evidence type="ECO:0000255" key="4">
    <source>
        <dbReference type="PROSITE-ProRule" id="PRU00541"/>
    </source>
</evidence>
<evidence type="ECO:0000255" key="5">
    <source>
        <dbReference type="PROSITE-ProRule" id="PRU00542"/>
    </source>
</evidence>
<evidence type="ECO:0000255" key="6">
    <source>
        <dbReference type="PROSITE-ProRule" id="PRU00746"/>
    </source>
</evidence>
<evidence type="ECO:0000256" key="7">
    <source>
        <dbReference type="SAM" id="MobiDB-lite"/>
    </source>
</evidence>
<evidence type="ECO:0000305" key="8"/>
<reference key="1">
    <citation type="journal article" date="2007" name="Science">
        <title>The Fusarium graminearum genome reveals a link between localized polymorphism and pathogen specialization.</title>
        <authorList>
            <person name="Cuomo C.A."/>
            <person name="Gueldener U."/>
            <person name="Xu J.-R."/>
            <person name="Trail F."/>
            <person name="Turgeon B.G."/>
            <person name="Di Pietro A."/>
            <person name="Walton J.D."/>
            <person name="Ma L.-J."/>
            <person name="Baker S.E."/>
            <person name="Rep M."/>
            <person name="Adam G."/>
            <person name="Antoniw J."/>
            <person name="Baldwin T."/>
            <person name="Calvo S.E."/>
            <person name="Chang Y.-L."/>
            <person name="DeCaprio D."/>
            <person name="Gale L.R."/>
            <person name="Gnerre S."/>
            <person name="Goswami R.S."/>
            <person name="Hammond-Kosack K."/>
            <person name="Harris L.J."/>
            <person name="Hilburn K."/>
            <person name="Kennell J.C."/>
            <person name="Kroken S."/>
            <person name="Magnuson J.K."/>
            <person name="Mannhaupt G."/>
            <person name="Mauceli E.W."/>
            <person name="Mewes H.-W."/>
            <person name="Mitterbauer R."/>
            <person name="Muehlbauer G."/>
            <person name="Muensterkoetter M."/>
            <person name="Nelson D."/>
            <person name="O'Donnell K."/>
            <person name="Ouellet T."/>
            <person name="Qi W."/>
            <person name="Quesneville H."/>
            <person name="Roncero M.I.G."/>
            <person name="Seong K.-Y."/>
            <person name="Tetko I.V."/>
            <person name="Urban M."/>
            <person name="Waalwijk C."/>
            <person name="Ward T.J."/>
            <person name="Yao J."/>
            <person name="Birren B.W."/>
            <person name="Kistler H.C."/>
        </authorList>
    </citation>
    <scope>NUCLEOTIDE SEQUENCE [LARGE SCALE GENOMIC DNA]</scope>
    <source>
        <strain>ATCC MYA-4620 / CBS 123657 / FGSC 9075 / NRRL 31084 / PH-1</strain>
    </source>
</reference>
<reference key="2">
    <citation type="journal article" date="2010" name="Nature">
        <title>Comparative genomics reveals mobile pathogenicity chromosomes in Fusarium.</title>
        <authorList>
            <person name="Ma L.-J."/>
            <person name="van der Does H.C."/>
            <person name="Borkovich K.A."/>
            <person name="Coleman J.J."/>
            <person name="Daboussi M.-J."/>
            <person name="Di Pietro A."/>
            <person name="Dufresne M."/>
            <person name="Freitag M."/>
            <person name="Grabherr M."/>
            <person name="Henrissat B."/>
            <person name="Houterman P.M."/>
            <person name="Kang S."/>
            <person name="Shim W.-B."/>
            <person name="Woloshuk C."/>
            <person name="Xie X."/>
            <person name="Xu J.-R."/>
            <person name="Antoniw J."/>
            <person name="Baker S.E."/>
            <person name="Bluhm B.H."/>
            <person name="Breakspear A."/>
            <person name="Brown D.W."/>
            <person name="Butchko R.A.E."/>
            <person name="Chapman S."/>
            <person name="Coulson R."/>
            <person name="Coutinho P.M."/>
            <person name="Danchin E.G.J."/>
            <person name="Diener A."/>
            <person name="Gale L.R."/>
            <person name="Gardiner D.M."/>
            <person name="Goff S."/>
            <person name="Hammond-Kosack K.E."/>
            <person name="Hilburn K."/>
            <person name="Hua-Van A."/>
            <person name="Jonkers W."/>
            <person name="Kazan K."/>
            <person name="Kodira C.D."/>
            <person name="Koehrsen M."/>
            <person name="Kumar L."/>
            <person name="Lee Y.-H."/>
            <person name="Li L."/>
            <person name="Manners J.M."/>
            <person name="Miranda-Saavedra D."/>
            <person name="Mukherjee M."/>
            <person name="Park G."/>
            <person name="Park J."/>
            <person name="Park S.-Y."/>
            <person name="Proctor R.H."/>
            <person name="Regev A."/>
            <person name="Ruiz-Roldan M.C."/>
            <person name="Sain D."/>
            <person name="Sakthikumar S."/>
            <person name="Sykes S."/>
            <person name="Schwartz D.C."/>
            <person name="Turgeon B.G."/>
            <person name="Wapinski I."/>
            <person name="Yoder O."/>
            <person name="Young S."/>
            <person name="Zeng Q."/>
            <person name="Zhou S."/>
            <person name="Galagan J."/>
            <person name="Cuomo C.A."/>
            <person name="Kistler H.C."/>
            <person name="Rep M."/>
        </authorList>
    </citation>
    <scope>GENOME REANNOTATION</scope>
    <source>
        <strain>ATCC MYA-4620 / CBS 123657 / FGSC 9075 / NRRL 31084 / PH-1</strain>
    </source>
</reference>
<reference key="3">
    <citation type="journal article" date="2015" name="BMC Genomics">
        <title>The completed genome sequence of the pathogenic ascomycete fungus Fusarium graminearum.</title>
        <authorList>
            <person name="King R."/>
            <person name="Urban M."/>
            <person name="Hammond-Kosack M.C.U."/>
            <person name="Hassani-Pak K."/>
            <person name="Hammond-Kosack K.E."/>
        </authorList>
    </citation>
    <scope>NUCLEOTIDE SEQUENCE [LARGE SCALE GENOMIC DNA]</scope>
    <source>
        <strain>ATCC MYA-4620 / CBS 123657 / FGSC 9075 / NRRL 31084 / PH-1</strain>
    </source>
</reference>
<name>INO80_GIBZE</name>
<organism>
    <name type="scientific">Gibberella zeae (strain ATCC MYA-4620 / CBS 123657 / FGSC 9075 / NRRL 31084 / PH-1)</name>
    <name type="common">Wheat head blight fungus</name>
    <name type="synonym">Fusarium graminearum</name>
    <dbReference type="NCBI Taxonomy" id="229533"/>
    <lineage>
        <taxon>Eukaryota</taxon>
        <taxon>Fungi</taxon>
        <taxon>Dikarya</taxon>
        <taxon>Ascomycota</taxon>
        <taxon>Pezizomycotina</taxon>
        <taxon>Sordariomycetes</taxon>
        <taxon>Hypocreomycetidae</taxon>
        <taxon>Hypocreales</taxon>
        <taxon>Nectriaceae</taxon>
        <taxon>Fusarium</taxon>
    </lineage>
</organism>
<accession>Q4IL82</accession>
<accession>A0A098D5N1</accession>
<accession>A0A0E0RSM9</accession>
<accession>V6QYI0</accession>
<dbReference type="EC" id="3.6.4.-" evidence="1"/>
<dbReference type="EMBL" id="DS231663">
    <property type="protein sequence ID" value="ESU07413.1"/>
    <property type="molecule type" value="Genomic_DNA"/>
</dbReference>
<dbReference type="EMBL" id="HG970332">
    <property type="protein sequence ID" value="CEF74254.1"/>
    <property type="molecule type" value="Genomic_DNA"/>
</dbReference>
<dbReference type="RefSeq" id="XP_011317898.1">
    <property type="nucleotide sequence ID" value="XM_011319596.1"/>
</dbReference>
<dbReference type="SMR" id="Q4IL82"/>
<dbReference type="FunCoup" id="Q4IL82">
    <property type="interactions" value="1080"/>
</dbReference>
<dbReference type="STRING" id="229533.Q4IL82"/>
<dbReference type="GeneID" id="23549425"/>
<dbReference type="KEGG" id="fgr:FGSG_02026"/>
<dbReference type="VEuPathDB" id="FungiDB:FGRAMPH1_01G04893"/>
<dbReference type="eggNOG" id="KOG0388">
    <property type="taxonomic scope" value="Eukaryota"/>
</dbReference>
<dbReference type="HOGENOM" id="CLU_000315_26_1_1"/>
<dbReference type="InParanoid" id="Q4IL82"/>
<dbReference type="OrthoDB" id="125468at110618"/>
<dbReference type="Proteomes" id="UP000070720">
    <property type="component" value="Chromosome 1"/>
</dbReference>
<dbReference type="GO" id="GO:0031011">
    <property type="term" value="C:Ino80 complex"/>
    <property type="evidence" value="ECO:0007669"/>
    <property type="project" value="InterPro"/>
</dbReference>
<dbReference type="GO" id="GO:0005524">
    <property type="term" value="F:ATP binding"/>
    <property type="evidence" value="ECO:0007669"/>
    <property type="project" value="UniProtKB-KW"/>
</dbReference>
<dbReference type="GO" id="GO:0016887">
    <property type="term" value="F:ATP hydrolysis activity"/>
    <property type="evidence" value="ECO:0007669"/>
    <property type="project" value="TreeGrafter"/>
</dbReference>
<dbReference type="GO" id="GO:0140658">
    <property type="term" value="F:ATP-dependent chromatin remodeler activity"/>
    <property type="evidence" value="ECO:0007669"/>
    <property type="project" value="InterPro"/>
</dbReference>
<dbReference type="GO" id="GO:0003677">
    <property type="term" value="F:DNA binding"/>
    <property type="evidence" value="ECO:0007669"/>
    <property type="project" value="UniProtKB-KW"/>
</dbReference>
<dbReference type="GO" id="GO:0042393">
    <property type="term" value="F:histone binding"/>
    <property type="evidence" value="ECO:0007669"/>
    <property type="project" value="TreeGrafter"/>
</dbReference>
<dbReference type="GO" id="GO:0006281">
    <property type="term" value="P:DNA repair"/>
    <property type="evidence" value="ECO:0007669"/>
    <property type="project" value="UniProtKB-KW"/>
</dbReference>
<dbReference type="GO" id="GO:0006351">
    <property type="term" value="P:DNA-templated transcription"/>
    <property type="evidence" value="ECO:0007669"/>
    <property type="project" value="InterPro"/>
</dbReference>
<dbReference type="GO" id="GO:0060255">
    <property type="term" value="P:regulation of macromolecule metabolic process"/>
    <property type="evidence" value="ECO:0007669"/>
    <property type="project" value="UniProtKB-ARBA"/>
</dbReference>
<dbReference type="CDD" id="cd18002">
    <property type="entry name" value="DEXQc_INO80"/>
    <property type="match status" value="1"/>
</dbReference>
<dbReference type="CDD" id="cd18793">
    <property type="entry name" value="SF2_C_SNF"/>
    <property type="match status" value="1"/>
</dbReference>
<dbReference type="FunFam" id="3.40.50.10810:FF:000006">
    <property type="entry name" value="Putative DNA helicase INO80"/>
    <property type="match status" value="1"/>
</dbReference>
<dbReference type="FunFam" id="3.40.50.300:FF:001269">
    <property type="entry name" value="SNF2 family helicase/ATPase"/>
    <property type="match status" value="1"/>
</dbReference>
<dbReference type="Gene3D" id="3.40.50.300">
    <property type="entry name" value="P-loop containing nucleotide triphosphate hydrolases"/>
    <property type="match status" value="2"/>
</dbReference>
<dbReference type="Gene3D" id="3.40.50.10810">
    <property type="entry name" value="Tandem AAA-ATPase domain"/>
    <property type="match status" value="1"/>
</dbReference>
<dbReference type="InterPro" id="IPR020838">
    <property type="entry name" value="DBINO"/>
</dbReference>
<dbReference type="InterPro" id="IPR031047">
    <property type="entry name" value="DEXQc_INO80"/>
</dbReference>
<dbReference type="InterPro" id="IPR014001">
    <property type="entry name" value="Helicase_ATP-bd"/>
</dbReference>
<dbReference type="InterPro" id="IPR001650">
    <property type="entry name" value="Helicase_C-like"/>
</dbReference>
<dbReference type="InterPro" id="IPR050520">
    <property type="entry name" value="INO80/SWR1_helicase"/>
</dbReference>
<dbReference type="InterPro" id="IPR027417">
    <property type="entry name" value="P-loop_NTPase"/>
</dbReference>
<dbReference type="InterPro" id="IPR038718">
    <property type="entry name" value="SNF2-like_sf"/>
</dbReference>
<dbReference type="InterPro" id="IPR049730">
    <property type="entry name" value="SNF2/RAD54-like_C"/>
</dbReference>
<dbReference type="InterPro" id="IPR000330">
    <property type="entry name" value="SNF2_N"/>
</dbReference>
<dbReference type="PANTHER" id="PTHR45685:SF2">
    <property type="entry name" value="CHROMATIN-REMODELING ATPASE INO80"/>
    <property type="match status" value="1"/>
</dbReference>
<dbReference type="PANTHER" id="PTHR45685">
    <property type="entry name" value="HELICASE SRCAP-RELATED"/>
    <property type="match status" value="1"/>
</dbReference>
<dbReference type="Pfam" id="PF13892">
    <property type="entry name" value="DBINO"/>
    <property type="match status" value="1"/>
</dbReference>
<dbReference type="Pfam" id="PF00271">
    <property type="entry name" value="Helicase_C"/>
    <property type="match status" value="1"/>
</dbReference>
<dbReference type="Pfam" id="PF00176">
    <property type="entry name" value="SNF2-rel_dom"/>
    <property type="match status" value="1"/>
</dbReference>
<dbReference type="SMART" id="SM00487">
    <property type="entry name" value="DEXDc"/>
    <property type="match status" value="1"/>
</dbReference>
<dbReference type="SMART" id="SM00490">
    <property type="entry name" value="HELICc"/>
    <property type="match status" value="1"/>
</dbReference>
<dbReference type="SUPFAM" id="SSF52540">
    <property type="entry name" value="P-loop containing nucleoside triphosphate hydrolases"/>
    <property type="match status" value="2"/>
</dbReference>
<dbReference type="PROSITE" id="PS51413">
    <property type="entry name" value="DBINO"/>
    <property type="match status" value="1"/>
</dbReference>
<dbReference type="PROSITE" id="PS51192">
    <property type="entry name" value="HELICASE_ATP_BIND_1"/>
    <property type="match status" value="1"/>
</dbReference>
<dbReference type="PROSITE" id="PS51194">
    <property type="entry name" value="HELICASE_CTER"/>
    <property type="match status" value="1"/>
</dbReference>
<sequence>MDQNGYNSSALQRPPRRGDEGCEEDRDSRPHHHHRHHHHHHHHRRDGDLPAGAVAGEAATASSNAGGANAHQHSTFSLRSPKPEYRPPPFSSPNGHNHSHHNTSTSSANHSLQSPPRPALPNPYMSSSTGAPGGPVAPALPPPVGINSSSSPGSSAAGLHQRHHQPGAPAHQHRAAPPPVSPLHPPVAYYPPGTNTDIYIPPPEPKPASRGFYDPTTDTTKERRISDAATPGASWHNANANAPPAGTPKTRDPYSYSQTADQHTPSYYNGGSYTSPRGPSYNRPRSPLSHSHQNPPAGSLSPPGQQPLLASPSVRHGTTANMNPTTNGASAIPPFKSDLAAPSPPKPAPSSTTSRANPMSFDSILSSSEPAPKPKEPSPIIAREPEIKEEREPRRDRESKRDSREPKQTKRSLEPELDHDTEVEKDVETEPEPLPSREKEKEPAPKKRGARKSTKGRASDIRDAATPKNGRRLSVKKESPTPRLPAKRQANGQPKPKTWSAEMEKKIQNAESDIENRAANLDADEFDEQQYKERAQKRRRVMSELDVEYGLSRRDALANTISKKLVLHAELGKRRYDDVFYDEALHEVREQEVYAEKERKKDMQRKRRREKSMAVTMEQKEAALARAEAAEDETERQKHLRDAERASKKAQQTKLILQKGIKGPARNLEINLEGGTMSSFQASDVESGEAGTPSGKRKGKGRSGPRLKKSKEQKQAEKDSAEAAQAALDAGEELPTKEENRVRIKIKKTKKDVAVDSEKDKDEAEKTEEEVVEKKTKKSKDKDKEKVDDIPDNEKRFMSKGYNQIYDQIWRDMARKDVNKTFKLAVDSYATKASNLKKTAILASKEAKRWQLRTNKGTKDLQARAKRVMRDMMGFWKRNEREERDLRKAAEKQEIENARKEEADREAARQKRKLNFLISQTELYSHFIGKKIKTDEVERSTDNPEIAKDAHQTDQKMLDIDEPTGPVIGKVTNFENLDFEEGSDEALRAAAMANAQNAIAEAQKKARDFNNQGLDMDDEGEMNFQNPTGLGDVEIEQPKLINAQLKEYQLKGLNWLVNLYEQGINGILADEMGLGKTVQSISVMAYLAEKHDIWGPFLVVAPASTLHNWQQEIAKFVPEFKILPYWGGASDRKVLRKFWDRKHTTYRKDAPFHVCVTSYQLVVSDVAYFQKMRWQYMILDEAQAIKSSQSSRWKALLNFHCRNRLLLTGTPIQNNMQELWALLHFIMPSLFDSHDEFSEWFSKDIESHAQSNTKLNEDQLKRLHMILKPFMLRRVKKHVQKELGDKIELDIFCDLTYRQRAYYSNLRNQINIMDLVEKATMGDDQDSGTLMNLVMQFRKVCNHPDLFERAEVNSPFACAYFAETASFVREGNDVAVGYSSRNLIEYELPRLVWRDGGRVHKAGPDSQVAGWKNRTLNHLMNIWSPDNIRDSSDGSKAFSWLRFADTSPNEAYQATHQSLIARAAKELQKRDRLGYMNVAYSDTEDANFTPAHALFQIRPRQNRKPLADITNEGILSRLMNVAQGDYDESGLGRLEPAGRPRASAPPIQVSCRSWASEFERSEVLFNAPIRKILYGPTVFEEKALVEKKLPMELWPTRQMLPKPDHEKKGFTNISIPSMQRFVTDSGKLAKLDDLLFKLKSEGHRVLLYFQMTRMIDMMEEYLTYRNYKYCRLDGSTKLEDRRDTVHDFQTRPEIFIFLLSTRAGGLGINLTTADTVIFYDSDWNPTIDSQAMDRAHRLGQTKQVTVYRLITRGTIEERIRKRAMQKEEVQRVVIQGGGASVDFSGRRAPENRNRDIAMWLADDEQAEMIERREKELLESGELEKQQKKKGGKRRKAENSASLDEMYHEGEGNFDDGSKGVSGTATPATAATPADSDSKGKKGRKGTKRAKTAKQRLAIADGMME</sequence>
<comment type="function">
    <text evidence="6">ATPase component of the INO80 complex which remodels chromatin by shifting nucleosomes and is involved in DNA repair.</text>
</comment>
<comment type="catalytic activity">
    <reaction evidence="1">
        <text>ATP + H2O = ADP + phosphate + H(+)</text>
        <dbReference type="Rhea" id="RHEA:13065"/>
        <dbReference type="ChEBI" id="CHEBI:15377"/>
        <dbReference type="ChEBI" id="CHEBI:15378"/>
        <dbReference type="ChEBI" id="CHEBI:30616"/>
        <dbReference type="ChEBI" id="CHEBI:43474"/>
        <dbReference type="ChEBI" id="CHEBI:456216"/>
    </reaction>
</comment>
<comment type="subunit">
    <text evidence="6">Component of the INO80 chromatin-remodeling complex.</text>
</comment>
<comment type="subcellular location">
    <subcellularLocation>
        <location evidence="6">Nucleus</location>
    </subcellularLocation>
</comment>
<comment type="domain">
    <text evidence="2">The DBINO region is involved in binding to DNA.</text>
</comment>
<comment type="similarity">
    <text evidence="8">Belongs to the SNF2/RAD54 helicase family.</text>
</comment>
<keyword id="KW-0010">Activator</keyword>
<keyword id="KW-0067">ATP-binding</keyword>
<keyword id="KW-0175">Coiled coil</keyword>
<keyword id="KW-0227">DNA damage</keyword>
<keyword id="KW-0234">DNA repair</keyword>
<keyword id="KW-0238">DNA-binding</keyword>
<keyword id="KW-0378">Hydrolase</keyword>
<keyword id="KW-0547">Nucleotide-binding</keyword>
<keyword id="KW-0539">Nucleus</keyword>
<keyword id="KW-1185">Reference proteome</keyword>
<keyword id="KW-0804">Transcription</keyword>
<keyword id="KW-0805">Transcription regulation</keyword>
<protein>
    <recommendedName>
        <fullName evidence="1">Chromatin-remodeling ATPase INO80</fullName>
        <ecNumber evidence="1">3.6.4.-</ecNumber>
    </recommendedName>
</protein>
<gene>
    <name type="primary">INO80</name>
    <name type="ORF">FGRRES_02026</name>
    <name type="ORF">FGSG_02026</name>
</gene>